<organism>
    <name type="scientific">Brucella ovis (strain ATCC 25840 / 63/290 / NCTC 10512)</name>
    <dbReference type="NCBI Taxonomy" id="444178"/>
    <lineage>
        <taxon>Bacteria</taxon>
        <taxon>Pseudomonadati</taxon>
        <taxon>Pseudomonadota</taxon>
        <taxon>Alphaproteobacteria</taxon>
        <taxon>Hyphomicrobiales</taxon>
        <taxon>Brucellaceae</taxon>
        <taxon>Brucella/Ochrobactrum group</taxon>
        <taxon>Brucella</taxon>
    </lineage>
</organism>
<accession>A5VSE3</accession>
<proteinExistence type="inferred from homology"/>
<evidence type="ECO:0000255" key="1">
    <source>
        <dbReference type="HAMAP-Rule" id="MF_01346"/>
    </source>
</evidence>
<name>ATPA_BRUO2</name>
<comment type="function">
    <text evidence="1">Produces ATP from ADP in the presence of a proton gradient across the membrane. The alpha chain is a regulatory subunit.</text>
</comment>
<comment type="catalytic activity">
    <reaction evidence="1">
        <text>ATP + H2O + 4 H(+)(in) = ADP + phosphate + 5 H(+)(out)</text>
        <dbReference type="Rhea" id="RHEA:57720"/>
        <dbReference type="ChEBI" id="CHEBI:15377"/>
        <dbReference type="ChEBI" id="CHEBI:15378"/>
        <dbReference type="ChEBI" id="CHEBI:30616"/>
        <dbReference type="ChEBI" id="CHEBI:43474"/>
        <dbReference type="ChEBI" id="CHEBI:456216"/>
        <dbReference type="EC" id="7.1.2.2"/>
    </reaction>
</comment>
<comment type="subunit">
    <text evidence="1">F-type ATPases have 2 components, CF(1) - the catalytic core - and CF(0) - the membrane proton channel. CF(1) has five subunits: alpha(3), beta(3), gamma(1), delta(1), epsilon(1). CF(0) has three main subunits: a(1), b(2) and c(9-12). The alpha and beta chains form an alternating ring which encloses part of the gamma chain. CF(1) is attached to CF(0) by a central stalk formed by the gamma and epsilon chains, while a peripheral stalk is formed by the delta and b chains.</text>
</comment>
<comment type="subcellular location">
    <subcellularLocation>
        <location evidence="1">Cell inner membrane</location>
        <topology evidence="1">Peripheral membrane protein</topology>
    </subcellularLocation>
</comment>
<comment type="similarity">
    <text evidence="1">Belongs to the ATPase alpha/beta chains family.</text>
</comment>
<gene>
    <name evidence="1" type="primary">atpA</name>
    <name type="ordered locus">BOV_1734</name>
</gene>
<feature type="chain" id="PRO_1000055053" description="ATP synthase subunit alpha">
    <location>
        <begin position="1"/>
        <end position="509"/>
    </location>
</feature>
<feature type="binding site" evidence="1">
    <location>
        <begin position="169"/>
        <end position="176"/>
    </location>
    <ligand>
        <name>ATP</name>
        <dbReference type="ChEBI" id="CHEBI:30616"/>
    </ligand>
</feature>
<feature type="site" description="Required for activity" evidence="1">
    <location>
        <position position="370"/>
    </location>
</feature>
<dbReference type="EC" id="7.1.2.2" evidence="1"/>
<dbReference type="EMBL" id="CP000708">
    <property type="protein sequence ID" value="ABQ60199.1"/>
    <property type="molecule type" value="Genomic_DNA"/>
</dbReference>
<dbReference type="RefSeq" id="WP_006013771.1">
    <property type="nucleotide sequence ID" value="NC_009505.1"/>
</dbReference>
<dbReference type="SMR" id="A5VSE3"/>
<dbReference type="GeneID" id="45125084"/>
<dbReference type="KEGG" id="bov:BOV_1734"/>
<dbReference type="HOGENOM" id="CLU_010091_2_1_5"/>
<dbReference type="PhylomeDB" id="A5VSE3"/>
<dbReference type="Proteomes" id="UP000006383">
    <property type="component" value="Chromosome I"/>
</dbReference>
<dbReference type="GO" id="GO:0005886">
    <property type="term" value="C:plasma membrane"/>
    <property type="evidence" value="ECO:0007669"/>
    <property type="project" value="UniProtKB-SubCell"/>
</dbReference>
<dbReference type="GO" id="GO:0045259">
    <property type="term" value="C:proton-transporting ATP synthase complex"/>
    <property type="evidence" value="ECO:0007669"/>
    <property type="project" value="UniProtKB-KW"/>
</dbReference>
<dbReference type="GO" id="GO:0043531">
    <property type="term" value="F:ADP binding"/>
    <property type="evidence" value="ECO:0007669"/>
    <property type="project" value="TreeGrafter"/>
</dbReference>
<dbReference type="GO" id="GO:0005524">
    <property type="term" value="F:ATP binding"/>
    <property type="evidence" value="ECO:0007669"/>
    <property type="project" value="UniProtKB-UniRule"/>
</dbReference>
<dbReference type="GO" id="GO:0046933">
    <property type="term" value="F:proton-transporting ATP synthase activity, rotational mechanism"/>
    <property type="evidence" value="ECO:0007669"/>
    <property type="project" value="UniProtKB-UniRule"/>
</dbReference>
<dbReference type="CDD" id="cd18113">
    <property type="entry name" value="ATP-synt_F1_alpha_C"/>
    <property type="match status" value="1"/>
</dbReference>
<dbReference type="CDD" id="cd18116">
    <property type="entry name" value="ATP-synt_F1_alpha_N"/>
    <property type="match status" value="1"/>
</dbReference>
<dbReference type="CDD" id="cd01132">
    <property type="entry name" value="F1-ATPase_alpha_CD"/>
    <property type="match status" value="1"/>
</dbReference>
<dbReference type="FunFam" id="1.20.150.20:FF:000001">
    <property type="entry name" value="ATP synthase subunit alpha"/>
    <property type="match status" value="1"/>
</dbReference>
<dbReference type="FunFam" id="2.40.30.20:FF:000001">
    <property type="entry name" value="ATP synthase subunit alpha"/>
    <property type="match status" value="1"/>
</dbReference>
<dbReference type="FunFam" id="3.40.50.300:FF:002432">
    <property type="entry name" value="ATP synthase subunit alpha, mitochondrial"/>
    <property type="match status" value="1"/>
</dbReference>
<dbReference type="Gene3D" id="2.40.30.20">
    <property type="match status" value="1"/>
</dbReference>
<dbReference type="Gene3D" id="1.20.150.20">
    <property type="entry name" value="ATP synthase alpha/beta chain, C-terminal domain"/>
    <property type="match status" value="1"/>
</dbReference>
<dbReference type="Gene3D" id="3.40.50.300">
    <property type="entry name" value="P-loop containing nucleotide triphosphate hydrolases"/>
    <property type="match status" value="1"/>
</dbReference>
<dbReference type="HAMAP" id="MF_01346">
    <property type="entry name" value="ATP_synth_alpha_bact"/>
    <property type="match status" value="1"/>
</dbReference>
<dbReference type="InterPro" id="IPR023366">
    <property type="entry name" value="ATP_synth_asu-like_sf"/>
</dbReference>
<dbReference type="InterPro" id="IPR000793">
    <property type="entry name" value="ATP_synth_asu_C"/>
</dbReference>
<dbReference type="InterPro" id="IPR038376">
    <property type="entry name" value="ATP_synth_asu_C_sf"/>
</dbReference>
<dbReference type="InterPro" id="IPR033732">
    <property type="entry name" value="ATP_synth_F1_a_nt-bd_dom"/>
</dbReference>
<dbReference type="InterPro" id="IPR005294">
    <property type="entry name" value="ATP_synth_F1_asu"/>
</dbReference>
<dbReference type="InterPro" id="IPR020003">
    <property type="entry name" value="ATPase_a/bsu_AS"/>
</dbReference>
<dbReference type="InterPro" id="IPR004100">
    <property type="entry name" value="ATPase_F1/V1/A1_a/bsu_N"/>
</dbReference>
<dbReference type="InterPro" id="IPR036121">
    <property type="entry name" value="ATPase_F1/V1/A1_a/bsu_N_sf"/>
</dbReference>
<dbReference type="InterPro" id="IPR000194">
    <property type="entry name" value="ATPase_F1/V1/A1_a/bsu_nucl-bd"/>
</dbReference>
<dbReference type="InterPro" id="IPR027417">
    <property type="entry name" value="P-loop_NTPase"/>
</dbReference>
<dbReference type="NCBIfam" id="TIGR00962">
    <property type="entry name" value="atpA"/>
    <property type="match status" value="1"/>
</dbReference>
<dbReference type="NCBIfam" id="NF009884">
    <property type="entry name" value="PRK13343.1"/>
    <property type="match status" value="1"/>
</dbReference>
<dbReference type="PANTHER" id="PTHR48082">
    <property type="entry name" value="ATP SYNTHASE SUBUNIT ALPHA, MITOCHONDRIAL"/>
    <property type="match status" value="1"/>
</dbReference>
<dbReference type="PANTHER" id="PTHR48082:SF2">
    <property type="entry name" value="ATP SYNTHASE SUBUNIT ALPHA, MITOCHONDRIAL"/>
    <property type="match status" value="1"/>
</dbReference>
<dbReference type="Pfam" id="PF00006">
    <property type="entry name" value="ATP-synt_ab"/>
    <property type="match status" value="1"/>
</dbReference>
<dbReference type="Pfam" id="PF00306">
    <property type="entry name" value="ATP-synt_ab_C"/>
    <property type="match status" value="1"/>
</dbReference>
<dbReference type="Pfam" id="PF02874">
    <property type="entry name" value="ATP-synt_ab_N"/>
    <property type="match status" value="1"/>
</dbReference>
<dbReference type="PIRSF" id="PIRSF039088">
    <property type="entry name" value="F_ATPase_subunit_alpha"/>
    <property type="match status" value="1"/>
</dbReference>
<dbReference type="SUPFAM" id="SSF47917">
    <property type="entry name" value="C-terminal domain of alpha and beta subunits of F1 ATP synthase"/>
    <property type="match status" value="1"/>
</dbReference>
<dbReference type="SUPFAM" id="SSF50615">
    <property type="entry name" value="N-terminal domain of alpha and beta subunits of F1 ATP synthase"/>
    <property type="match status" value="1"/>
</dbReference>
<dbReference type="SUPFAM" id="SSF52540">
    <property type="entry name" value="P-loop containing nucleoside triphosphate hydrolases"/>
    <property type="match status" value="1"/>
</dbReference>
<dbReference type="PROSITE" id="PS00152">
    <property type="entry name" value="ATPASE_ALPHA_BETA"/>
    <property type="match status" value="1"/>
</dbReference>
<protein>
    <recommendedName>
        <fullName evidence="1">ATP synthase subunit alpha</fullName>
        <ecNumber evidence="1">7.1.2.2</ecNumber>
    </recommendedName>
    <alternativeName>
        <fullName evidence="1">ATP synthase F1 sector subunit alpha</fullName>
    </alternativeName>
    <alternativeName>
        <fullName evidence="1">F-ATPase subunit alpha</fullName>
    </alternativeName>
</protein>
<sequence>MDIRAAEISAILKEQIKNFGKEAEVSEVGQVLFVGDGIARVYGLDNVQAGEMVEFPGGIRGMALNLESDNVGVVIFGADRDIKEGDVVKRTGAIVDVPVGPELLGRVVDALGNPIDGKGPIKAKERRRVDVKAPGIIPRKSVHEPMSTGLKAIDALIPVGRGQRELVIGDRQTGKTAIILDTFLNQKPIHDNGPDKDKLYCVYVAVGQKRSTVAQFVKVLEERGALEYSIVVAATASDPAPMQYLAPFAGCAMGEYFRDNGQHALIGYDDLSKQAVAYRQMSLLLRRPPGREAYPGDVFYLHSRLLERAAKLNDENGAGSLTALPVIETQGNDVSAFIPTNVISITDGQIFLETNLFYQGIRPAVNVGLSVSRVGSSAQIKAMKQVAGSIKGELAQYREMAAFAQFGSDLDAATQRLLNRGARLTELLKQPQFSPLKTEEQVAVIYAGVNGYLDKLAVNQVGKFEEGLLASLRTEHKDVLEGIRNEKALTDDLKAKLKAAIDAFAKSFA</sequence>
<reference key="1">
    <citation type="journal article" date="2009" name="PLoS ONE">
        <title>Genome degradation in Brucella ovis corresponds with narrowing of its host range and tissue tropism.</title>
        <authorList>
            <person name="Tsolis R.M."/>
            <person name="Seshadri R."/>
            <person name="Santos R.L."/>
            <person name="Sangari F.J."/>
            <person name="Lobo J.M."/>
            <person name="de Jong M.F."/>
            <person name="Ren Q."/>
            <person name="Myers G."/>
            <person name="Brinkac L.M."/>
            <person name="Nelson W.C."/>
            <person name="Deboy R.T."/>
            <person name="Angiuoli S."/>
            <person name="Khouri H."/>
            <person name="Dimitrov G."/>
            <person name="Robinson J.R."/>
            <person name="Mulligan S."/>
            <person name="Walker R.L."/>
            <person name="Elzer P.E."/>
            <person name="Hassan K.A."/>
            <person name="Paulsen I.T."/>
        </authorList>
    </citation>
    <scope>NUCLEOTIDE SEQUENCE [LARGE SCALE GENOMIC DNA]</scope>
    <source>
        <strain>ATCC 25840 / 63/290 / NCTC 10512</strain>
    </source>
</reference>
<keyword id="KW-0066">ATP synthesis</keyword>
<keyword id="KW-0067">ATP-binding</keyword>
<keyword id="KW-0997">Cell inner membrane</keyword>
<keyword id="KW-1003">Cell membrane</keyword>
<keyword id="KW-0139">CF(1)</keyword>
<keyword id="KW-0375">Hydrogen ion transport</keyword>
<keyword id="KW-0406">Ion transport</keyword>
<keyword id="KW-0472">Membrane</keyword>
<keyword id="KW-0547">Nucleotide-binding</keyword>
<keyword id="KW-1278">Translocase</keyword>
<keyword id="KW-0813">Transport</keyword>